<sequence>MNIKKLILPAAAALGGVVIPVLIYMFFNYGKPELIKGWAIPIATDTAFVLGILSFFSRHISLELRAFIIGFSLIDDAFALIILALFYAKTINTLALLISSIIIFILFILNYRQVKQLFYYIIVGLLLCISMVKSGIHDTLCRAIIALFIPVNIKGEFNTSFKKLENLIRPFVNYFILPLFVFMNSGILLEYFAFKGICSNSILALIYGIIFGLSVGKQLGIMLFSYPFVKFKLCNLPSDTSWLKFYSIAILRGIGFTLSLFIGSNV</sequence>
<accession>B0BVP1</accession>
<name>NHAA_RICRO</name>
<keyword id="KW-0997">Cell inner membrane</keyword>
<keyword id="KW-1003">Cell membrane</keyword>
<keyword id="KW-0472">Membrane</keyword>
<keyword id="KW-0812">Transmembrane</keyword>
<keyword id="KW-1133">Transmembrane helix</keyword>
<protein>
    <recommendedName>
        <fullName>Putative Na(+)/H(+) antiporter NhaA homolog</fullName>
    </recommendedName>
</protein>
<evidence type="ECO:0000250" key="1"/>
<evidence type="ECO:0000255" key="2"/>
<evidence type="ECO:0000305" key="3"/>
<dbReference type="EMBL" id="CP000766">
    <property type="protein sequence ID" value="ABY73301.1"/>
    <property type="molecule type" value="Genomic_DNA"/>
</dbReference>
<dbReference type="SMR" id="B0BVP1"/>
<dbReference type="KEGG" id="rrj:RrIowa_1585"/>
<dbReference type="eggNOG" id="COG3004">
    <property type="taxonomic scope" value="Bacteria"/>
</dbReference>
<dbReference type="HOGENOM" id="CLU_015803_1_0_5"/>
<dbReference type="Proteomes" id="UP000000796">
    <property type="component" value="Chromosome"/>
</dbReference>
<dbReference type="GO" id="GO:0005886">
    <property type="term" value="C:plasma membrane"/>
    <property type="evidence" value="ECO:0007669"/>
    <property type="project" value="UniProtKB-SubCell"/>
</dbReference>
<dbReference type="GO" id="GO:0015385">
    <property type="term" value="F:sodium:proton antiporter activity"/>
    <property type="evidence" value="ECO:0007669"/>
    <property type="project" value="TreeGrafter"/>
</dbReference>
<dbReference type="GO" id="GO:0006885">
    <property type="term" value="P:regulation of pH"/>
    <property type="evidence" value="ECO:0007669"/>
    <property type="project" value="InterPro"/>
</dbReference>
<dbReference type="Gene3D" id="1.20.1530.10">
    <property type="entry name" value="Na+/H+ antiporter like domain"/>
    <property type="match status" value="1"/>
</dbReference>
<dbReference type="InterPro" id="IPR023171">
    <property type="entry name" value="Na/H_antiporter_dom_sf"/>
</dbReference>
<dbReference type="InterPro" id="IPR004670">
    <property type="entry name" value="NhaA"/>
</dbReference>
<dbReference type="PANTHER" id="PTHR30341:SF0">
    <property type="entry name" value="NA(+)_H(+) ANTIPORTER NHAA"/>
    <property type="match status" value="1"/>
</dbReference>
<dbReference type="PANTHER" id="PTHR30341">
    <property type="entry name" value="SODIUM ION/PROTON ANTIPORTER NHAA-RELATED"/>
    <property type="match status" value="1"/>
</dbReference>
<dbReference type="Pfam" id="PF06965">
    <property type="entry name" value="Na_H_antiport_1"/>
    <property type="match status" value="1"/>
</dbReference>
<organism>
    <name type="scientific">Rickettsia rickettsii (strain Iowa)</name>
    <dbReference type="NCBI Taxonomy" id="452659"/>
    <lineage>
        <taxon>Bacteria</taxon>
        <taxon>Pseudomonadati</taxon>
        <taxon>Pseudomonadota</taxon>
        <taxon>Alphaproteobacteria</taxon>
        <taxon>Rickettsiales</taxon>
        <taxon>Rickettsiaceae</taxon>
        <taxon>Rickettsieae</taxon>
        <taxon>Rickettsia</taxon>
        <taxon>spotted fever group</taxon>
    </lineage>
</organism>
<gene>
    <name type="primary">nhaA</name>
    <name type="ordered locus">RrIowa_1585</name>
</gene>
<proteinExistence type="uncertain"/>
<reference key="1">
    <citation type="journal article" date="2008" name="Infect. Immun.">
        <title>Genomic comparison of virulent Rickettsia rickettsii Sheila Smith and avirulent Rickettsia rickettsii Iowa.</title>
        <authorList>
            <person name="Ellison D.W."/>
            <person name="Clark T.R."/>
            <person name="Sturdevant D.E."/>
            <person name="Virtaneva K."/>
            <person name="Porcella S.F."/>
            <person name="Hackstadt T."/>
        </authorList>
    </citation>
    <scope>NUCLEOTIDE SEQUENCE [LARGE SCALE GENOMIC DNA]</scope>
    <source>
        <strain>Iowa</strain>
    </source>
</reference>
<comment type="subcellular location">
    <subcellularLocation>
        <location evidence="1">Cell inner membrane</location>
        <topology evidence="1">Multi-pass membrane protein</topology>
    </subcellularLocation>
</comment>
<comment type="similarity">
    <text evidence="3">Belongs to the NhaA Na(+)/H(+) (TC 2.A.33) antiporter family.</text>
</comment>
<comment type="caution">
    <text evidence="3">Could be the product of a pseudogene. This sequence is shorter than orthologs.</text>
</comment>
<feature type="chain" id="PRO_0000334401" description="Putative Na(+)/H(+) antiporter NhaA homolog">
    <location>
        <begin position="1"/>
        <end position="266"/>
    </location>
</feature>
<feature type="transmembrane region" description="Helical" evidence="2">
    <location>
        <begin position="7"/>
        <end position="27"/>
    </location>
</feature>
<feature type="transmembrane region" description="Helical" evidence="2">
    <location>
        <begin position="37"/>
        <end position="57"/>
    </location>
</feature>
<feature type="transmembrane region" description="Helical" evidence="2">
    <location>
        <begin position="66"/>
        <end position="86"/>
    </location>
</feature>
<feature type="transmembrane region" description="Helical" evidence="2">
    <location>
        <begin position="91"/>
        <end position="111"/>
    </location>
</feature>
<feature type="transmembrane region" description="Helical" evidence="2">
    <location>
        <begin position="117"/>
        <end position="137"/>
    </location>
</feature>
<feature type="transmembrane region" description="Helical" evidence="2">
    <location>
        <begin position="174"/>
        <end position="194"/>
    </location>
</feature>
<feature type="transmembrane region" description="Helical" evidence="2">
    <location>
        <begin position="202"/>
        <end position="222"/>
    </location>
</feature>
<feature type="transmembrane region" description="Helical" evidence="2">
    <location>
        <begin position="242"/>
        <end position="262"/>
    </location>
</feature>